<accession>Q92PI3</accession>
<proteinExistence type="inferred from homology"/>
<sequence length="254" mass="29008">MNRRRRIYEGKAKILYEGPEPGTLIQFFKDDATAFNKKKHDVIDGKGVLNNRISEYIFTHLNKIGIPTHFIRRLNMREQLIKEVEIIPLEIVVRNVAAGSLAKRLGIEEGTVLPRSIIEFYYKADALDDPMVSEEHITAFGWASPQELDDIMALAIRINDFLSGLFLGVGIQLVDFKVECGRLYEGDMMRIVLADEISPDSCRLWDIETKEKMDKDRFRRDMGGLVEAYQEVARRLGIINENEPPRGSGPVLVK</sequence>
<name>PUR7_RHIME</name>
<gene>
    <name evidence="1" type="primary">purC</name>
    <name type="ordered locus">R01772</name>
    <name type="ORF">SMc00495</name>
</gene>
<protein>
    <recommendedName>
        <fullName evidence="1">Phosphoribosylaminoimidazole-succinocarboxamide synthase</fullName>
        <ecNumber evidence="1">6.3.2.6</ecNumber>
    </recommendedName>
    <alternativeName>
        <fullName evidence="1">SAICAR synthetase</fullName>
    </alternativeName>
</protein>
<reference key="1">
    <citation type="journal article" date="2001" name="Proc. Natl. Acad. Sci. U.S.A.">
        <title>Analysis of the chromosome sequence of the legume symbiont Sinorhizobium meliloti strain 1021.</title>
        <authorList>
            <person name="Capela D."/>
            <person name="Barloy-Hubler F."/>
            <person name="Gouzy J."/>
            <person name="Bothe G."/>
            <person name="Ampe F."/>
            <person name="Batut J."/>
            <person name="Boistard P."/>
            <person name="Becker A."/>
            <person name="Boutry M."/>
            <person name="Cadieu E."/>
            <person name="Dreano S."/>
            <person name="Gloux S."/>
            <person name="Godrie T."/>
            <person name="Goffeau A."/>
            <person name="Kahn D."/>
            <person name="Kiss E."/>
            <person name="Lelaure V."/>
            <person name="Masuy D."/>
            <person name="Pohl T."/>
            <person name="Portetelle D."/>
            <person name="Puehler A."/>
            <person name="Purnelle B."/>
            <person name="Ramsperger U."/>
            <person name="Renard C."/>
            <person name="Thebault P."/>
            <person name="Vandenbol M."/>
            <person name="Weidner S."/>
            <person name="Galibert F."/>
        </authorList>
    </citation>
    <scope>NUCLEOTIDE SEQUENCE [LARGE SCALE GENOMIC DNA]</scope>
    <source>
        <strain>1021</strain>
    </source>
</reference>
<reference key="2">
    <citation type="journal article" date="2001" name="Science">
        <title>The composite genome of the legume symbiont Sinorhizobium meliloti.</title>
        <authorList>
            <person name="Galibert F."/>
            <person name="Finan T.M."/>
            <person name="Long S.R."/>
            <person name="Puehler A."/>
            <person name="Abola P."/>
            <person name="Ampe F."/>
            <person name="Barloy-Hubler F."/>
            <person name="Barnett M.J."/>
            <person name="Becker A."/>
            <person name="Boistard P."/>
            <person name="Bothe G."/>
            <person name="Boutry M."/>
            <person name="Bowser L."/>
            <person name="Buhrmester J."/>
            <person name="Cadieu E."/>
            <person name="Capela D."/>
            <person name="Chain P."/>
            <person name="Cowie A."/>
            <person name="Davis R.W."/>
            <person name="Dreano S."/>
            <person name="Federspiel N.A."/>
            <person name="Fisher R.F."/>
            <person name="Gloux S."/>
            <person name="Godrie T."/>
            <person name="Goffeau A."/>
            <person name="Golding B."/>
            <person name="Gouzy J."/>
            <person name="Gurjal M."/>
            <person name="Hernandez-Lucas I."/>
            <person name="Hong A."/>
            <person name="Huizar L."/>
            <person name="Hyman R.W."/>
            <person name="Jones T."/>
            <person name="Kahn D."/>
            <person name="Kahn M.L."/>
            <person name="Kalman S."/>
            <person name="Keating D.H."/>
            <person name="Kiss E."/>
            <person name="Komp C."/>
            <person name="Lelaure V."/>
            <person name="Masuy D."/>
            <person name="Palm C."/>
            <person name="Peck M.C."/>
            <person name="Pohl T.M."/>
            <person name="Portetelle D."/>
            <person name="Purnelle B."/>
            <person name="Ramsperger U."/>
            <person name="Surzycki R."/>
            <person name="Thebault P."/>
            <person name="Vandenbol M."/>
            <person name="Vorhoelter F.J."/>
            <person name="Weidner S."/>
            <person name="Wells D.H."/>
            <person name="Wong K."/>
            <person name="Yeh K.-C."/>
            <person name="Batut J."/>
        </authorList>
    </citation>
    <scope>NUCLEOTIDE SEQUENCE [LARGE SCALE GENOMIC DNA]</scope>
    <source>
        <strain>1021</strain>
    </source>
</reference>
<organism>
    <name type="scientific">Rhizobium meliloti (strain 1021)</name>
    <name type="common">Ensifer meliloti</name>
    <name type="synonym">Sinorhizobium meliloti</name>
    <dbReference type="NCBI Taxonomy" id="266834"/>
    <lineage>
        <taxon>Bacteria</taxon>
        <taxon>Pseudomonadati</taxon>
        <taxon>Pseudomonadota</taxon>
        <taxon>Alphaproteobacteria</taxon>
        <taxon>Hyphomicrobiales</taxon>
        <taxon>Rhizobiaceae</taxon>
        <taxon>Sinorhizobium/Ensifer group</taxon>
        <taxon>Sinorhizobium</taxon>
    </lineage>
</organism>
<keyword id="KW-0067">ATP-binding</keyword>
<keyword id="KW-0436">Ligase</keyword>
<keyword id="KW-0547">Nucleotide-binding</keyword>
<keyword id="KW-0658">Purine biosynthesis</keyword>
<keyword id="KW-1185">Reference proteome</keyword>
<dbReference type="EC" id="6.3.2.6" evidence="1"/>
<dbReference type="EMBL" id="AL591688">
    <property type="protein sequence ID" value="CAC46351.1"/>
    <property type="molecule type" value="Genomic_DNA"/>
</dbReference>
<dbReference type="RefSeq" id="NP_385878.1">
    <property type="nucleotide sequence ID" value="NC_003047.1"/>
</dbReference>
<dbReference type="RefSeq" id="WP_003531407.1">
    <property type="nucleotide sequence ID" value="NC_003047.1"/>
</dbReference>
<dbReference type="SMR" id="Q92PI3"/>
<dbReference type="EnsemblBacteria" id="CAC46351">
    <property type="protein sequence ID" value="CAC46351"/>
    <property type="gene ID" value="SMc00495"/>
</dbReference>
<dbReference type="GeneID" id="89576110"/>
<dbReference type="KEGG" id="sme:SMc00495"/>
<dbReference type="PATRIC" id="fig|266834.11.peg.3211"/>
<dbReference type="eggNOG" id="COG0152">
    <property type="taxonomic scope" value="Bacteria"/>
</dbReference>
<dbReference type="HOGENOM" id="CLU_061495_2_0_5"/>
<dbReference type="OrthoDB" id="9801549at2"/>
<dbReference type="UniPathway" id="UPA00074">
    <property type="reaction ID" value="UER00131"/>
</dbReference>
<dbReference type="Proteomes" id="UP000001976">
    <property type="component" value="Chromosome"/>
</dbReference>
<dbReference type="GO" id="GO:0005829">
    <property type="term" value="C:cytosol"/>
    <property type="evidence" value="ECO:0007669"/>
    <property type="project" value="TreeGrafter"/>
</dbReference>
<dbReference type="GO" id="GO:0005524">
    <property type="term" value="F:ATP binding"/>
    <property type="evidence" value="ECO:0007669"/>
    <property type="project" value="UniProtKB-KW"/>
</dbReference>
<dbReference type="GO" id="GO:0004639">
    <property type="term" value="F:phosphoribosylaminoimidazolesuccinocarboxamide synthase activity"/>
    <property type="evidence" value="ECO:0007669"/>
    <property type="project" value="UniProtKB-UniRule"/>
</dbReference>
<dbReference type="GO" id="GO:0006189">
    <property type="term" value="P:'de novo' IMP biosynthetic process"/>
    <property type="evidence" value="ECO:0007669"/>
    <property type="project" value="UniProtKB-UniRule"/>
</dbReference>
<dbReference type="GO" id="GO:0009236">
    <property type="term" value="P:cobalamin biosynthetic process"/>
    <property type="evidence" value="ECO:0007669"/>
    <property type="project" value="InterPro"/>
</dbReference>
<dbReference type="CDD" id="cd01415">
    <property type="entry name" value="SAICAR_synt_PurC"/>
    <property type="match status" value="1"/>
</dbReference>
<dbReference type="FunFam" id="3.30.470.20:FF:000006">
    <property type="entry name" value="Phosphoribosylaminoimidazole-succinocarboxamide synthase"/>
    <property type="match status" value="1"/>
</dbReference>
<dbReference type="Gene3D" id="3.30.470.20">
    <property type="entry name" value="ATP-grasp fold, B domain"/>
    <property type="match status" value="1"/>
</dbReference>
<dbReference type="Gene3D" id="3.30.200.20">
    <property type="entry name" value="Phosphorylase Kinase, domain 1"/>
    <property type="match status" value="1"/>
</dbReference>
<dbReference type="HAMAP" id="MF_00137">
    <property type="entry name" value="SAICAR_synth"/>
    <property type="match status" value="1"/>
</dbReference>
<dbReference type="InterPro" id="IPR028923">
    <property type="entry name" value="SAICAR_synt/ADE2_N"/>
</dbReference>
<dbReference type="InterPro" id="IPR033934">
    <property type="entry name" value="SAICAR_synt_PurC"/>
</dbReference>
<dbReference type="InterPro" id="IPR001636">
    <property type="entry name" value="SAICAR_synth"/>
</dbReference>
<dbReference type="InterPro" id="IPR050089">
    <property type="entry name" value="SAICAR_synthetase"/>
</dbReference>
<dbReference type="InterPro" id="IPR018236">
    <property type="entry name" value="SAICAR_synthetase_CS"/>
</dbReference>
<dbReference type="NCBIfam" id="TIGR00081">
    <property type="entry name" value="purC"/>
    <property type="match status" value="1"/>
</dbReference>
<dbReference type="PANTHER" id="PTHR43599">
    <property type="entry name" value="MULTIFUNCTIONAL PROTEIN ADE2"/>
    <property type="match status" value="1"/>
</dbReference>
<dbReference type="PANTHER" id="PTHR43599:SF3">
    <property type="entry name" value="SI:DKEY-6E2.2"/>
    <property type="match status" value="1"/>
</dbReference>
<dbReference type="Pfam" id="PF01259">
    <property type="entry name" value="SAICAR_synt"/>
    <property type="match status" value="1"/>
</dbReference>
<dbReference type="SUPFAM" id="SSF56104">
    <property type="entry name" value="SAICAR synthase-like"/>
    <property type="match status" value="1"/>
</dbReference>
<dbReference type="PROSITE" id="PS01057">
    <property type="entry name" value="SAICAR_SYNTHETASE_1"/>
    <property type="match status" value="1"/>
</dbReference>
<feature type="chain" id="PRO_0000100861" description="Phosphoribosylaminoimidazole-succinocarboxamide synthase">
    <location>
        <begin position="1"/>
        <end position="254"/>
    </location>
</feature>
<comment type="catalytic activity">
    <reaction evidence="1">
        <text>5-amino-1-(5-phospho-D-ribosyl)imidazole-4-carboxylate + L-aspartate + ATP = (2S)-2-[5-amino-1-(5-phospho-beta-D-ribosyl)imidazole-4-carboxamido]succinate + ADP + phosphate + 2 H(+)</text>
        <dbReference type="Rhea" id="RHEA:22628"/>
        <dbReference type="ChEBI" id="CHEBI:15378"/>
        <dbReference type="ChEBI" id="CHEBI:29991"/>
        <dbReference type="ChEBI" id="CHEBI:30616"/>
        <dbReference type="ChEBI" id="CHEBI:43474"/>
        <dbReference type="ChEBI" id="CHEBI:58443"/>
        <dbReference type="ChEBI" id="CHEBI:77657"/>
        <dbReference type="ChEBI" id="CHEBI:456216"/>
        <dbReference type="EC" id="6.3.2.6"/>
    </reaction>
</comment>
<comment type="pathway">
    <text evidence="1">Purine metabolism; IMP biosynthesis via de novo pathway; 5-amino-1-(5-phospho-D-ribosyl)imidazole-4-carboxamide from 5-amino-1-(5-phospho-D-ribosyl)imidazole-4-carboxylate: step 1/2.</text>
</comment>
<comment type="similarity">
    <text evidence="1">Belongs to the SAICAR synthetase family.</text>
</comment>
<evidence type="ECO:0000255" key="1">
    <source>
        <dbReference type="HAMAP-Rule" id="MF_00137"/>
    </source>
</evidence>